<organism>
    <name type="scientific">Brucella suis biovar 1 (strain 1330)</name>
    <dbReference type="NCBI Taxonomy" id="204722"/>
    <lineage>
        <taxon>Bacteria</taxon>
        <taxon>Pseudomonadati</taxon>
        <taxon>Pseudomonadota</taxon>
        <taxon>Alphaproteobacteria</taxon>
        <taxon>Hyphomicrobiales</taxon>
        <taxon>Brucellaceae</taxon>
        <taxon>Brucella/Ochrobactrum group</taxon>
        <taxon>Brucella</taxon>
    </lineage>
</organism>
<dbReference type="EMBL" id="AE014291">
    <property type="protein sequence ID" value="AAN31055.1"/>
    <property type="molecule type" value="Genomic_DNA"/>
</dbReference>
<dbReference type="EMBL" id="CP002997">
    <property type="protein sequence ID" value="AEM19472.1"/>
    <property type="molecule type" value="Genomic_DNA"/>
</dbReference>
<dbReference type="RefSeq" id="WP_006191092.1">
    <property type="nucleotide sequence ID" value="NZ_KN046804.1"/>
</dbReference>
<dbReference type="SMR" id="Q8FXT2"/>
<dbReference type="GeneID" id="45053085"/>
<dbReference type="KEGG" id="bms:BR2165"/>
<dbReference type="KEGG" id="bsi:BS1330_I2159"/>
<dbReference type="PATRIC" id="fig|204722.21.peg.645"/>
<dbReference type="HOGENOM" id="CLU_006301_10_0_5"/>
<dbReference type="PhylomeDB" id="Q8FXT2"/>
<dbReference type="Proteomes" id="UP000007104">
    <property type="component" value="Chromosome I"/>
</dbReference>
<dbReference type="GO" id="GO:0005829">
    <property type="term" value="C:cytosol"/>
    <property type="evidence" value="ECO:0007669"/>
    <property type="project" value="TreeGrafter"/>
</dbReference>
<dbReference type="GO" id="GO:0005525">
    <property type="term" value="F:GTP binding"/>
    <property type="evidence" value="ECO:0007669"/>
    <property type="project" value="UniProtKB-KW"/>
</dbReference>
<dbReference type="GO" id="GO:0003924">
    <property type="term" value="F:GTPase activity"/>
    <property type="evidence" value="ECO:0007669"/>
    <property type="project" value="UniProtKB-UniRule"/>
</dbReference>
<dbReference type="GO" id="GO:0097216">
    <property type="term" value="F:guanosine tetraphosphate binding"/>
    <property type="evidence" value="ECO:0007669"/>
    <property type="project" value="UniProtKB-ARBA"/>
</dbReference>
<dbReference type="GO" id="GO:0003743">
    <property type="term" value="F:translation initiation factor activity"/>
    <property type="evidence" value="ECO:0007669"/>
    <property type="project" value="UniProtKB-UniRule"/>
</dbReference>
<dbReference type="CDD" id="cd01887">
    <property type="entry name" value="IF2_eIF5B"/>
    <property type="match status" value="1"/>
</dbReference>
<dbReference type="CDD" id="cd03702">
    <property type="entry name" value="IF2_mtIF2_II"/>
    <property type="match status" value="1"/>
</dbReference>
<dbReference type="CDD" id="cd03692">
    <property type="entry name" value="mtIF2_IVc"/>
    <property type="match status" value="1"/>
</dbReference>
<dbReference type="CDD" id="cd22265">
    <property type="entry name" value="UDM1_RNF168"/>
    <property type="match status" value="1"/>
</dbReference>
<dbReference type="FunFam" id="2.40.30.10:FF:000007">
    <property type="entry name" value="Translation initiation factor IF-2"/>
    <property type="match status" value="1"/>
</dbReference>
<dbReference type="FunFam" id="2.40.30.10:FF:000008">
    <property type="entry name" value="Translation initiation factor IF-2"/>
    <property type="match status" value="1"/>
</dbReference>
<dbReference type="FunFam" id="3.40.50.10050:FF:000001">
    <property type="entry name" value="Translation initiation factor IF-2"/>
    <property type="match status" value="1"/>
</dbReference>
<dbReference type="FunFam" id="3.40.50.300:FF:000019">
    <property type="entry name" value="Translation initiation factor IF-2"/>
    <property type="match status" value="1"/>
</dbReference>
<dbReference type="Gene3D" id="3.40.50.300">
    <property type="entry name" value="P-loop containing nucleotide triphosphate hydrolases"/>
    <property type="match status" value="1"/>
</dbReference>
<dbReference type="Gene3D" id="2.40.30.10">
    <property type="entry name" value="Translation factors"/>
    <property type="match status" value="2"/>
</dbReference>
<dbReference type="Gene3D" id="3.40.50.10050">
    <property type="entry name" value="Translation initiation factor IF- 2, domain 3"/>
    <property type="match status" value="1"/>
</dbReference>
<dbReference type="HAMAP" id="MF_00100_B">
    <property type="entry name" value="IF_2_B"/>
    <property type="match status" value="1"/>
</dbReference>
<dbReference type="InterPro" id="IPR053905">
    <property type="entry name" value="EF-G-like_DII"/>
</dbReference>
<dbReference type="InterPro" id="IPR004161">
    <property type="entry name" value="EFTu-like_2"/>
</dbReference>
<dbReference type="InterPro" id="IPR013575">
    <property type="entry name" value="IF2_assoc_dom_bac"/>
</dbReference>
<dbReference type="InterPro" id="IPR044145">
    <property type="entry name" value="IF2_II"/>
</dbReference>
<dbReference type="InterPro" id="IPR006847">
    <property type="entry name" value="IF2_N"/>
</dbReference>
<dbReference type="InterPro" id="IPR027417">
    <property type="entry name" value="P-loop_NTPase"/>
</dbReference>
<dbReference type="InterPro" id="IPR005225">
    <property type="entry name" value="Small_GTP-bd"/>
</dbReference>
<dbReference type="InterPro" id="IPR000795">
    <property type="entry name" value="T_Tr_GTP-bd_dom"/>
</dbReference>
<dbReference type="InterPro" id="IPR000178">
    <property type="entry name" value="TF_IF2_bacterial-like"/>
</dbReference>
<dbReference type="InterPro" id="IPR015760">
    <property type="entry name" value="TIF_IF2"/>
</dbReference>
<dbReference type="InterPro" id="IPR023115">
    <property type="entry name" value="TIF_IF2_dom3"/>
</dbReference>
<dbReference type="InterPro" id="IPR036925">
    <property type="entry name" value="TIF_IF2_dom3_sf"/>
</dbReference>
<dbReference type="InterPro" id="IPR009000">
    <property type="entry name" value="Transl_B-barrel_sf"/>
</dbReference>
<dbReference type="NCBIfam" id="TIGR00487">
    <property type="entry name" value="IF-2"/>
    <property type="match status" value="1"/>
</dbReference>
<dbReference type="NCBIfam" id="TIGR00231">
    <property type="entry name" value="small_GTP"/>
    <property type="match status" value="1"/>
</dbReference>
<dbReference type="PANTHER" id="PTHR43381:SF5">
    <property type="entry name" value="TR-TYPE G DOMAIN-CONTAINING PROTEIN"/>
    <property type="match status" value="1"/>
</dbReference>
<dbReference type="PANTHER" id="PTHR43381">
    <property type="entry name" value="TRANSLATION INITIATION FACTOR IF-2-RELATED"/>
    <property type="match status" value="1"/>
</dbReference>
<dbReference type="Pfam" id="PF22042">
    <property type="entry name" value="EF-G_D2"/>
    <property type="match status" value="1"/>
</dbReference>
<dbReference type="Pfam" id="PF00009">
    <property type="entry name" value="GTP_EFTU"/>
    <property type="match status" value="1"/>
</dbReference>
<dbReference type="Pfam" id="PF03144">
    <property type="entry name" value="GTP_EFTU_D2"/>
    <property type="match status" value="1"/>
</dbReference>
<dbReference type="Pfam" id="PF11987">
    <property type="entry name" value="IF-2"/>
    <property type="match status" value="1"/>
</dbReference>
<dbReference type="Pfam" id="PF08364">
    <property type="entry name" value="IF2_assoc"/>
    <property type="match status" value="1"/>
</dbReference>
<dbReference type="Pfam" id="PF04760">
    <property type="entry name" value="IF2_N"/>
    <property type="match status" value="1"/>
</dbReference>
<dbReference type="SUPFAM" id="SSF52156">
    <property type="entry name" value="Initiation factor IF2/eIF5b, domain 3"/>
    <property type="match status" value="1"/>
</dbReference>
<dbReference type="SUPFAM" id="SSF52540">
    <property type="entry name" value="P-loop containing nucleoside triphosphate hydrolases"/>
    <property type="match status" value="1"/>
</dbReference>
<dbReference type="SUPFAM" id="SSF50447">
    <property type="entry name" value="Translation proteins"/>
    <property type="match status" value="2"/>
</dbReference>
<dbReference type="PROSITE" id="PS51722">
    <property type="entry name" value="G_TR_2"/>
    <property type="match status" value="1"/>
</dbReference>
<dbReference type="PROSITE" id="PS01176">
    <property type="entry name" value="IF2"/>
    <property type="match status" value="1"/>
</dbReference>
<accession>Q8FXT2</accession>
<accession>G0K9J1</accession>
<name>IF2_BRUSU</name>
<comment type="function">
    <text evidence="2">One of the essential components for the initiation of protein synthesis. Protects formylmethionyl-tRNA from spontaneous hydrolysis and promotes its binding to the 30S ribosomal subunits. Also involved in the hydrolysis of GTP during the formation of the 70S ribosomal complex.</text>
</comment>
<comment type="subcellular location">
    <subcellularLocation>
        <location evidence="2">Cytoplasm</location>
    </subcellularLocation>
</comment>
<comment type="similarity">
    <text evidence="2">Belongs to the TRAFAC class translation factor GTPase superfamily. Classic translation factor GTPase family. IF-2 subfamily.</text>
</comment>
<gene>
    <name evidence="2" type="primary">infB</name>
    <name type="ordered locus">BR2165</name>
    <name type="ordered locus">BS1330_I2159</name>
</gene>
<proteinExistence type="inferred from homology"/>
<reference key="1">
    <citation type="journal article" date="2002" name="Proc. Natl. Acad. Sci. U.S.A.">
        <title>The Brucella suis genome reveals fundamental similarities between animal and plant pathogens and symbionts.</title>
        <authorList>
            <person name="Paulsen I.T."/>
            <person name="Seshadri R."/>
            <person name="Nelson K.E."/>
            <person name="Eisen J.A."/>
            <person name="Heidelberg J.F."/>
            <person name="Read T.D."/>
            <person name="Dodson R.J."/>
            <person name="Umayam L.A."/>
            <person name="Brinkac L.M."/>
            <person name="Beanan M.J."/>
            <person name="Daugherty S.C."/>
            <person name="DeBoy R.T."/>
            <person name="Durkin A.S."/>
            <person name="Kolonay J.F."/>
            <person name="Madupu R."/>
            <person name="Nelson W.C."/>
            <person name="Ayodeji B."/>
            <person name="Kraul M."/>
            <person name="Shetty J."/>
            <person name="Malek J.A."/>
            <person name="Van Aken S.E."/>
            <person name="Riedmuller S."/>
            <person name="Tettelin H."/>
            <person name="Gill S.R."/>
            <person name="White O."/>
            <person name="Salzberg S.L."/>
            <person name="Hoover D.L."/>
            <person name="Lindler L.E."/>
            <person name="Halling S.M."/>
            <person name="Boyle S.M."/>
            <person name="Fraser C.M."/>
        </authorList>
    </citation>
    <scope>NUCLEOTIDE SEQUENCE [LARGE SCALE GENOMIC DNA]</scope>
    <source>
        <strain>1330</strain>
    </source>
</reference>
<reference key="2">
    <citation type="journal article" date="2011" name="J. Bacteriol.">
        <title>Revised genome sequence of Brucella suis 1330.</title>
        <authorList>
            <person name="Tae H."/>
            <person name="Shallom S."/>
            <person name="Settlage R."/>
            <person name="Preston D."/>
            <person name="Adams L.G."/>
            <person name="Garner H.R."/>
        </authorList>
    </citation>
    <scope>NUCLEOTIDE SEQUENCE [LARGE SCALE GENOMIC DNA]</scope>
    <source>
        <strain>1330</strain>
    </source>
</reference>
<evidence type="ECO:0000250" key="1"/>
<evidence type="ECO:0000255" key="2">
    <source>
        <dbReference type="HAMAP-Rule" id="MF_00100"/>
    </source>
</evidence>
<evidence type="ECO:0000256" key="3">
    <source>
        <dbReference type="SAM" id="MobiDB-lite"/>
    </source>
</evidence>
<sequence>MSDKTNDDKTLSVNPKKTLTLKRPGVEQSTVRQNFSHGRTKAVVVETKKRKFSRPDEKPEVEAAAAPKPAAPAAAPQQAPASAPVSASAAQASAPQPAPVKAPATKAPAAPSAPVTKPHVAQQRPVHQRPGGQQAQRPRPADRSGMVLNTLSRSEMDARRRALEEAQIREVEERARAVEEAKRRAEEDARRAKEREESARRQAEEEARLKAEAEARRKAEEEAAKRMPQPEARSERRDDARPAPYGARPQQAGRPQGGRPQPAGRPQQGSPRPAPIIADAAPIAGKPLPQSQLRKPGQSDDDDDRRSDAARRGVAAKPEVRAPKVVKGEDDRRRGKLTLTSNLEEEGRSRSLSAMRRRQEKFKRSQMQETREKISREVTIPETITLQELAQRMAERSVDIIKYLMKQGQMMKPGDVIDADTAQLIAEEFGHTVKRVAESDVEEGIFDVADNESAMVSRPPVVTIMGHVDHGKTSLLDAIRHANVVSGEAGGITQHIGAYQVVQNGQKITFIDTPGHAAFTAMRARGAQATDIAILVVAADDSVMPQTIESINHAKAAGVPIIVAINKIDKPAADPQKVRTALLQHEVFVESMGGEVLDVEVSAKNKINLDKLLDAVLLQAEMLDLKADPDRTAEGVVIEAQLDRGRGSVATVLIQKGTLHPGDILVAGSEWGRVRALVNDRGEHVKEAGPAMPVEILGLQGTPQAGDRFAVVANEAKAREIAEYRQRLARDKAVARQSGARGSLEQMMNQLQVSGTKEFPLVIKGDVQGSIEAITNALDKLGTDEVRARIVHSGAGGITESDVSLAEASNAAIIGFNVRANKQARDSAEQQGIEIRYYNIIYDLIDDVKAAMSGLLSPERRETFLGNAEILEVFNITKVGKVAGCRVTEGKVERGAGVRLIRDNVVIHEGKLKTLKRFKDEVAEVPSGQECGMAFENYDDIRAGDVIEAFRVEHVSRTL</sequence>
<protein>
    <recommendedName>
        <fullName evidence="2">Translation initiation factor IF-2</fullName>
    </recommendedName>
</protein>
<keyword id="KW-0963">Cytoplasm</keyword>
<keyword id="KW-0342">GTP-binding</keyword>
<keyword id="KW-0396">Initiation factor</keyword>
<keyword id="KW-0547">Nucleotide-binding</keyword>
<keyword id="KW-0648">Protein biosynthesis</keyword>
<feature type="chain" id="PRO_0000137179" description="Translation initiation factor IF-2">
    <location>
        <begin position="1"/>
        <end position="959"/>
    </location>
</feature>
<feature type="domain" description="tr-type G">
    <location>
        <begin position="457"/>
        <end position="626"/>
    </location>
</feature>
<feature type="region of interest" description="Disordered" evidence="3">
    <location>
        <begin position="1"/>
        <end position="374"/>
    </location>
</feature>
<feature type="region of interest" description="G1" evidence="1">
    <location>
        <begin position="466"/>
        <end position="473"/>
    </location>
</feature>
<feature type="region of interest" description="G2" evidence="1">
    <location>
        <begin position="491"/>
        <end position="495"/>
    </location>
</feature>
<feature type="region of interest" description="G3" evidence="1">
    <location>
        <begin position="512"/>
        <end position="515"/>
    </location>
</feature>
<feature type="region of interest" description="G4" evidence="1">
    <location>
        <begin position="566"/>
        <end position="569"/>
    </location>
</feature>
<feature type="region of interest" description="G5" evidence="1">
    <location>
        <begin position="602"/>
        <end position="604"/>
    </location>
</feature>
<feature type="compositionally biased region" description="Basic and acidic residues" evidence="3">
    <location>
        <begin position="1"/>
        <end position="10"/>
    </location>
</feature>
<feature type="compositionally biased region" description="Polar residues" evidence="3">
    <location>
        <begin position="27"/>
        <end position="37"/>
    </location>
</feature>
<feature type="compositionally biased region" description="Low complexity" evidence="3">
    <location>
        <begin position="63"/>
        <end position="118"/>
    </location>
</feature>
<feature type="compositionally biased region" description="Low complexity" evidence="3">
    <location>
        <begin position="128"/>
        <end position="138"/>
    </location>
</feature>
<feature type="compositionally biased region" description="Basic and acidic residues" evidence="3">
    <location>
        <begin position="154"/>
        <end position="225"/>
    </location>
</feature>
<feature type="compositionally biased region" description="Basic and acidic residues" evidence="3">
    <location>
        <begin position="232"/>
        <end position="241"/>
    </location>
</feature>
<feature type="compositionally biased region" description="Low complexity" evidence="3">
    <location>
        <begin position="246"/>
        <end position="284"/>
    </location>
</feature>
<feature type="compositionally biased region" description="Basic and acidic residues" evidence="3">
    <location>
        <begin position="318"/>
        <end position="333"/>
    </location>
</feature>
<feature type="binding site" evidence="2">
    <location>
        <begin position="466"/>
        <end position="473"/>
    </location>
    <ligand>
        <name>GTP</name>
        <dbReference type="ChEBI" id="CHEBI:37565"/>
    </ligand>
</feature>
<feature type="binding site" evidence="2">
    <location>
        <begin position="512"/>
        <end position="516"/>
    </location>
    <ligand>
        <name>GTP</name>
        <dbReference type="ChEBI" id="CHEBI:37565"/>
    </ligand>
</feature>
<feature type="binding site" evidence="2">
    <location>
        <begin position="566"/>
        <end position="569"/>
    </location>
    <ligand>
        <name>GTP</name>
        <dbReference type="ChEBI" id="CHEBI:37565"/>
    </ligand>
</feature>